<proteinExistence type="evidence at transcript level"/>
<gene>
    <name type="primary">usp30</name>
    <name type="ORF">TEgg099b09.1</name>
</gene>
<comment type="function">
    <text evidence="1">Deubiquitinating enzyme that acts as a key inhibitor of mitophagy by counteracting the action of parkin (PRKN).</text>
</comment>
<comment type="catalytic activity">
    <reaction evidence="1">
        <text>Thiol-dependent hydrolysis of ester, thioester, amide, peptide and isopeptide bonds formed by the C-terminal Gly of ubiquitin (a 76-residue protein attached to proteins as an intracellular targeting signal).</text>
        <dbReference type="EC" id="3.4.19.12"/>
    </reaction>
</comment>
<comment type="subcellular location">
    <subcellularLocation>
        <location evidence="1">Mitochondrion outer membrane</location>
    </subcellularLocation>
</comment>
<comment type="similarity">
    <text evidence="6">Belongs to the peptidase C19 family.</text>
</comment>
<feature type="chain" id="PRO_0000377539" description="Ubiquitin carboxyl-terminal hydrolase 30">
    <location>
        <begin position="1"/>
        <end position="519"/>
    </location>
</feature>
<feature type="topological domain" description="Mitochondrial intermembrane" evidence="2">
    <location>
        <begin position="1"/>
        <end position="52"/>
    </location>
</feature>
<feature type="transmembrane region" description="Helical" evidence="2">
    <location>
        <begin position="53"/>
        <end position="73"/>
    </location>
</feature>
<feature type="topological domain" description="Cytoplasmic" evidence="2">
    <location>
        <begin position="74"/>
        <end position="519"/>
    </location>
</feature>
<feature type="domain" description="USP">
    <location>
        <begin position="85"/>
        <end position="504"/>
    </location>
</feature>
<feature type="region of interest" description="Disordered" evidence="5">
    <location>
        <begin position="379"/>
        <end position="405"/>
    </location>
</feature>
<feature type="active site" description="Nucleophile" evidence="3 4">
    <location>
        <position position="94"/>
    </location>
</feature>
<feature type="active site" description="Proton acceptor" evidence="3 4">
    <location>
        <position position="455"/>
    </location>
</feature>
<feature type="sequence conflict" description="In Ref. 1; CAJ81380." evidence="6" ref="1">
    <original>A</original>
    <variation>V</variation>
    <location>
        <position position="61"/>
    </location>
</feature>
<keyword id="KW-0378">Hydrolase</keyword>
<keyword id="KW-0472">Membrane</keyword>
<keyword id="KW-0496">Mitochondrion</keyword>
<keyword id="KW-1000">Mitochondrion outer membrane</keyword>
<keyword id="KW-0645">Protease</keyword>
<keyword id="KW-1185">Reference proteome</keyword>
<keyword id="KW-0788">Thiol protease</keyword>
<keyword id="KW-0812">Transmembrane</keyword>
<keyword id="KW-1133">Transmembrane helix</keyword>
<keyword id="KW-0833">Ubl conjugation pathway</keyword>
<reference key="1">
    <citation type="submission" date="2006-10" db="EMBL/GenBank/DDBJ databases">
        <authorList>
            <consortium name="Sanger Xenopus tropicalis EST/cDNA project"/>
        </authorList>
    </citation>
    <scope>NUCLEOTIDE SEQUENCE [LARGE SCALE MRNA]</scope>
    <source>
        <tissue>Egg</tissue>
    </source>
</reference>
<reference key="2">
    <citation type="submission" date="2007-03" db="EMBL/GenBank/DDBJ databases">
        <authorList>
            <consortium name="NIH - Xenopus Gene Collection (XGC) project"/>
        </authorList>
    </citation>
    <scope>NUCLEOTIDE SEQUENCE [LARGE SCALE MRNA]</scope>
    <source>
        <tissue>Tadpole</tissue>
    </source>
</reference>
<accession>A4QNN3</accession>
<accession>Q28CN8</accession>
<sequence length="519" mass="58683">MSWAPVSTWSRRTPLAACCSAPELPPAGAWKACAAGSLRIGPQGRCKMMKNWGMIGGIAAALAAGIYVLWGPISDRKKYRKGLVPGLLNLGNTCFMNSLLQGLASCPSFIRWLADFTSKYRQENNTTEHQHLSVTLLHLLKALCNQEGTEDEVLDASPLLEVLRAHRWQISSFEEQDAHELFHVLTSSLEDERDRRPHVTHLFDLDSLEFPLEPQRQIHCRTQVPIYPIPSQWKSQHPFHGRLTSNMVCKHCQHQSPMRYDTFDSLSLSIPVATWGHPITLDQCLQHFISTESVKDVVCENCTKIHAAQIPNSQSVENRKTTFVKQLKLGKLPQCLCIHLQRLSWSNQGSPLKRNEHVQFSEFLAMDRFKYRISGCSTSKQPANHLSAAEQETTDGKEGGAQNPTMPFLNGACSTSYISPPFTSPLPTNPEWTSSSYLFRLMAVVVHHGDMHSGHFVTYRRSPAAKNQKLTSQQWLWISDDTVRRTNFQEVLSSSAYLLFYERIQSNLHHPEDQRAAEK</sequence>
<dbReference type="EC" id="3.4.19.12" evidence="1"/>
<dbReference type="EMBL" id="CR926280">
    <property type="protein sequence ID" value="CAJ81380.1"/>
    <property type="molecule type" value="mRNA"/>
</dbReference>
<dbReference type="EMBL" id="BC135925">
    <property type="protein sequence ID" value="AAI35926.1"/>
    <property type="molecule type" value="mRNA"/>
</dbReference>
<dbReference type="RefSeq" id="NP_001039085.1">
    <property type="nucleotide sequence ID" value="NM_001045620.1"/>
</dbReference>
<dbReference type="SMR" id="A4QNN3"/>
<dbReference type="FunCoup" id="A4QNN3">
    <property type="interactions" value="3276"/>
</dbReference>
<dbReference type="STRING" id="8364.ENSXETP00000038088"/>
<dbReference type="PaxDb" id="8364-ENSXETP00000048254"/>
<dbReference type="GeneID" id="733894"/>
<dbReference type="KEGG" id="xtr:733894"/>
<dbReference type="AGR" id="Xenbase:XB-GENE-981069"/>
<dbReference type="CTD" id="84749"/>
<dbReference type="Xenbase" id="XB-GENE-981069">
    <property type="gene designation" value="usp30"/>
</dbReference>
<dbReference type="eggNOG" id="KOG1867">
    <property type="taxonomic scope" value="Eukaryota"/>
</dbReference>
<dbReference type="HOGENOM" id="CLU_008279_14_0_1"/>
<dbReference type="InParanoid" id="A4QNN3"/>
<dbReference type="OrthoDB" id="2248014at2759"/>
<dbReference type="TreeFam" id="TF105781"/>
<dbReference type="Reactome" id="R-XTR-5689880">
    <property type="pathway name" value="Ub-specific processing proteases"/>
</dbReference>
<dbReference type="Proteomes" id="UP000008143">
    <property type="component" value="Chromosome 1"/>
</dbReference>
<dbReference type="Bgee" id="ENSXETG00000022301">
    <property type="expression patterns" value="Expressed in egg cell and 14 other cell types or tissues"/>
</dbReference>
<dbReference type="GO" id="GO:0005741">
    <property type="term" value="C:mitochondrial outer membrane"/>
    <property type="evidence" value="ECO:0000250"/>
    <property type="project" value="UniProtKB"/>
</dbReference>
<dbReference type="GO" id="GO:0005739">
    <property type="term" value="C:mitochondrion"/>
    <property type="evidence" value="ECO:0000250"/>
    <property type="project" value="UniProtKB"/>
</dbReference>
<dbReference type="GO" id="GO:0004843">
    <property type="term" value="F:cysteine-type deubiquitinase activity"/>
    <property type="evidence" value="ECO:0000250"/>
    <property type="project" value="UniProtKB"/>
</dbReference>
<dbReference type="GO" id="GO:0004197">
    <property type="term" value="F:cysteine-type endopeptidase activity"/>
    <property type="evidence" value="ECO:0000250"/>
    <property type="project" value="UniProtKB"/>
</dbReference>
<dbReference type="GO" id="GO:0000422">
    <property type="term" value="P:autophagy of mitochondrion"/>
    <property type="evidence" value="ECO:0000250"/>
    <property type="project" value="UniProtKB"/>
</dbReference>
<dbReference type="GO" id="GO:0008053">
    <property type="term" value="P:mitochondrial fusion"/>
    <property type="evidence" value="ECO:0000250"/>
    <property type="project" value="UniProtKB"/>
</dbReference>
<dbReference type="GO" id="GO:0016579">
    <property type="term" value="P:protein deubiquitination"/>
    <property type="evidence" value="ECO:0000250"/>
    <property type="project" value="UniProtKB"/>
</dbReference>
<dbReference type="GO" id="GO:0035871">
    <property type="term" value="P:protein K11-linked deubiquitination"/>
    <property type="evidence" value="ECO:0000250"/>
    <property type="project" value="UniProtKB"/>
</dbReference>
<dbReference type="GO" id="GO:0044313">
    <property type="term" value="P:protein K6-linked deubiquitination"/>
    <property type="evidence" value="ECO:0000250"/>
    <property type="project" value="UniProtKB"/>
</dbReference>
<dbReference type="GO" id="GO:0006508">
    <property type="term" value="P:proteolysis"/>
    <property type="evidence" value="ECO:0007669"/>
    <property type="project" value="UniProtKB-KW"/>
</dbReference>
<dbReference type="CDD" id="cd02662">
    <property type="entry name" value="Peptidase_C19F"/>
    <property type="match status" value="1"/>
</dbReference>
<dbReference type="Gene3D" id="3.90.70.10">
    <property type="entry name" value="Cysteine proteinases"/>
    <property type="match status" value="1"/>
</dbReference>
<dbReference type="InterPro" id="IPR038765">
    <property type="entry name" value="Papain-like_cys_pep_sf"/>
</dbReference>
<dbReference type="InterPro" id="IPR050164">
    <property type="entry name" value="Peptidase_C19"/>
</dbReference>
<dbReference type="InterPro" id="IPR001394">
    <property type="entry name" value="Peptidase_C19_UCH"/>
</dbReference>
<dbReference type="InterPro" id="IPR018200">
    <property type="entry name" value="USP_CS"/>
</dbReference>
<dbReference type="InterPro" id="IPR028889">
    <property type="entry name" value="USP_dom"/>
</dbReference>
<dbReference type="PANTHER" id="PTHR24006">
    <property type="entry name" value="UBIQUITIN CARBOXYL-TERMINAL HYDROLASE"/>
    <property type="match status" value="1"/>
</dbReference>
<dbReference type="PANTHER" id="PTHR24006:SF888">
    <property type="entry name" value="UBIQUITIN CARBOXYL-TERMINAL HYDROLASE 30"/>
    <property type="match status" value="1"/>
</dbReference>
<dbReference type="Pfam" id="PF00443">
    <property type="entry name" value="UCH"/>
    <property type="match status" value="1"/>
</dbReference>
<dbReference type="SUPFAM" id="SSF54001">
    <property type="entry name" value="Cysteine proteinases"/>
    <property type="match status" value="1"/>
</dbReference>
<dbReference type="PROSITE" id="PS00972">
    <property type="entry name" value="USP_1"/>
    <property type="match status" value="1"/>
</dbReference>
<dbReference type="PROSITE" id="PS00973">
    <property type="entry name" value="USP_2"/>
    <property type="match status" value="1"/>
</dbReference>
<dbReference type="PROSITE" id="PS50235">
    <property type="entry name" value="USP_3"/>
    <property type="match status" value="1"/>
</dbReference>
<evidence type="ECO:0000250" key="1">
    <source>
        <dbReference type="UniProtKB" id="Q70CQ3"/>
    </source>
</evidence>
<evidence type="ECO:0000255" key="2"/>
<evidence type="ECO:0000255" key="3">
    <source>
        <dbReference type="PROSITE-ProRule" id="PRU10092"/>
    </source>
</evidence>
<evidence type="ECO:0000255" key="4">
    <source>
        <dbReference type="PROSITE-ProRule" id="PRU10093"/>
    </source>
</evidence>
<evidence type="ECO:0000256" key="5">
    <source>
        <dbReference type="SAM" id="MobiDB-lite"/>
    </source>
</evidence>
<evidence type="ECO:0000305" key="6"/>
<name>UBP30_XENTR</name>
<organism>
    <name type="scientific">Xenopus tropicalis</name>
    <name type="common">Western clawed frog</name>
    <name type="synonym">Silurana tropicalis</name>
    <dbReference type="NCBI Taxonomy" id="8364"/>
    <lineage>
        <taxon>Eukaryota</taxon>
        <taxon>Metazoa</taxon>
        <taxon>Chordata</taxon>
        <taxon>Craniata</taxon>
        <taxon>Vertebrata</taxon>
        <taxon>Euteleostomi</taxon>
        <taxon>Amphibia</taxon>
        <taxon>Batrachia</taxon>
        <taxon>Anura</taxon>
        <taxon>Pipoidea</taxon>
        <taxon>Pipidae</taxon>
        <taxon>Xenopodinae</taxon>
        <taxon>Xenopus</taxon>
        <taxon>Silurana</taxon>
    </lineage>
</organism>
<protein>
    <recommendedName>
        <fullName>Ubiquitin carboxyl-terminal hydrolase 30</fullName>
        <ecNumber evidence="1">3.4.19.12</ecNumber>
    </recommendedName>
    <alternativeName>
        <fullName>Deubiquitinating enzyme 30</fullName>
    </alternativeName>
    <alternativeName>
        <fullName>Ubiquitin thioesterase 30</fullName>
    </alternativeName>
    <alternativeName>
        <fullName>Ubiquitin-specific-processing protease 30</fullName>
        <shortName>Ub-specific protease 30</shortName>
    </alternativeName>
</protein>